<name>TEN1_CAEEL</name>
<evidence type="ECO:0000255" key="1"/>
<evidence type="ECO:0000255" key="2">
    <source>
        <dbReference type="PROSITE-ProRule" id="PRU00076"/>
    </source>
</evidence>
<evidence type="ECO:0000256" key="3">
    <source>
        <dbReference type="SAM" id="MobiDB-lite"/>
    </source>
</evidence>
<evidence type="ECO:0000269" key="4">
    <source>
    </source>
</evidence>
<evidence type="ECO:0000269" key="5">
    <source>
    </source>
</evidence>
<evidence type="ECO:0000269" key="6">
    <source>
    </source>
</evidence>
<evidence type="ECO:0000303" key="7">
    <source>
    </source>
</evidence>
<evidence type="ECO:0000305" key="8"/>
<feature type="chain" id="PRO_0000421019" description="Teneurin-1">
    <location>
        <begin position="1"/>
        <end position="2684"/>
    </location>
</feature>
<feature type="topological domain" description="Cytoplasmic" evidence="1">
    <location>
        <begin position="1"/>
        <end position="216"/>
    </location>
</feature>
<feature type="transmembrane region" description="Helical" evidence="1">
    <location>
        <begin position="217"/>
        <end position="237"/>
    </location>
</feature>
<feature type="topological domain" description="Extracellular" evidence="1">
    <location>
        <begin position="238"/>
        <end position="2684"/>
    </location>
</feature>
<feature type="domain" description="EGF-like 1" evidence="2">
    <location>
        <begin position="463"/>
        <end position="499"/>
    </location>
</feature>
<feature type="domain" description="EGF-like 2" evidence="2">
    <location>
        <begin position="501"/>
        <end position="534"/>
    </location>
</feature>
<feature type="domain" description="EGF-like 3" evidence="2">
    <location>
        <begin position="650"/>
        <end position="684"/>
    </location>
</feature>
<feature type="domain" description="EGF-like 4" evidence="2">
    <location>
        <begin position="716"/>
        <end position="753"/>
    </location>
</feature>
<feature type="repeat" description="NHL 1">
    <location>
        <begin position="1276"/>
        <end position="1317"/>
    </location>
</feature>
<feature type="repeat" description="NHL 2">
    <location>
        <begin position="1334"/>
        <end position="1378"/>
    </location>
</feature>
<feature type="repeat" description="NHL 3">
    <location>
        <begin position="1398"/>
        <end position="1441"/>
    </location>
</feature>
<feature type="repeat" description="NHL 4">
    <location>
        <begin position="1470"/>
        <end position="1513"/>
    </location>
</feature>
<feature type="region of interest" description="Disordered" evidence="3">
    <location>
        <begin position="1"/>
        <end position="37"/>
    </location>
</feature>
<feature type="region of interest" description="Disordered" evidence="3">
    <location>
        <begin position="127"/>
        <end position="156"/>
    </location>
</feature>
<feature type="region of interest" description="Disordered" evidence="3">
    <location>
        <begin position="170"/>
        <end position="204"/>
    </location>
</feature>
<feature type="region of interest" description="Disordered" evidence="3">
    <location>
        <begin position="576"/>
        <end position="614"/>
    </location>
</feature>
<feature type="compositionally biased region" description="Pro residues" evidence="3">
    <location>
        <begin position="11"/>
        <end position="24"/>
    </location>
</feature>
<feature type="compositionally biased region" description="Low complexity" evidence="3">
    <location>
        <begin position="127"/>
        <end position="136"/>
    </location>
</feature>
<feature type="compositionally biased region" description="Basic and acidic residues" evidence="3">
    <location>
        <begin position="584"/>
        <end position="593"/>
    </location>
</feature>
<feature type="compositionally biased region" description="Basic and acidic residues" evidence="3">
    <location>
        <begin position="605"/>
        <end position="614"/>
    </location>
</feature>
<feature type="disulfide bond" evidence="2">
    <location>
        <begin position="467"/>
        <end position="476"/>
    </location>
</feature>
<feature type="disulfide bond" evidence="2">
    <location>
        <begin position="472"/>
        <end position="487"/>
    </location>
</feature>
<feature type="disulfide bond" evidence="2">
    <location>
        <begin position="489"/>
        <end position="498"/>
    </location>
</feature>
<feature type="disulfide bond" evidence="2">
    <location>
        <begin position="505"/>
        <end position="516"/>
    </location>
</feature>
<feature type="disulfide bond" evidence="2">
    <location>
        <begin position="510"/>
        <end position="522"/>
    </location>
</feature>
<feature type="disulfide bond" evidence="2">
    <location>
        <begin position="524"/>
        <end position="533"/>
    </location>
</feature>
<feature type="disulfide bond" evidence="2">
    <location>
        <begin position="654"/>
        <end position="666"/>
    </location>
</feature>
<feature type="disulfide bond" evidence="2">
    <location>
        <begin position="659"/>
        <end position="672"/>
    </location>
</feature>
<feature type="disulfide bond" evidence="2">
    <location>
        <begin position="674"/>
        <end position="683"/>
    </location>
</feature>
<feature type="disulfide bond" evidence="2">
    <location>
        <begin position="720"/>
        <end position="730"/>
    </location>
</feature>
<feature type="disulfide bond" evidence="2">
    <location>
        <begin position="724"/>
        <end position="741"/>
    </location>
</feature>
<feature type="disulfide bond" evidence="2">
    <location>
        <begin position="743"/>
        <end position="752"/>
    </location>
</feature>
<feature type="splice variant" id="VSP_045023" description="In isoform 2." evidence="7">
    <location>
        <begin position="1"/>
        <end position="182"/>
    </location>
</feature>
<accession>G5EGQ6</accession>
<accession>B5BM17</accession>
<accession>Q5CCJ6</accession>
<comment type="function">
    <text evidence="4 5 6">Plays a role in the gonadal basement membrane maintenance and/or adhesion early in development. Contributes to the guidance of pharyngeal neurons.</text>
</comment>
<comment type="subcellular location">
    <subcellularLocation>
        <location evidence="4">Nucleus</location>
    </subcellularLocation>
    <subcellularLocation>
        <location evidence="4">Cell membrane</location>
    </subcellularLocation>
    <subcellularLocation>
        <location evidence="8">Membrane</location>
        <topology evidence="8">Single-pass membrane protein</topology>
    </subcellularLocation>
    <text>Colocalizes in the nucleus with a punctuate pattern.</text>
</comment>
<comment type="alternative products">
    <event type="alternative splicing"/>
    <isoform>
        <id>G5EGQ6-1</id>
        <name>1</name>
        <name>ten-1a</name>
        <name>ten-1L</name>
        <sequence type="displayed"/>
    </isoform>
    <isoform>
        <id>G5EGQ6-2</id>
        <name>2</name>
        <name>ten-1b</name>
        <name>ten-1S</name>
        <sequence type="described" ref="VSP_045023"/>
    </isoform>
</comment>
<comment type="tissue specificity">
    <text evidence="5 6">Isoform 1 is mainly expressed in organs derived from the mesoderm, including the pharynx, vulva muscles, gonad distal tip cells, intestine and several tail neurons. Isoform 2 is mainly expressed in the organs derived from the ectoderm, including hypodermal cells, head ganglion neurons and tail neurons (at protein level).</text>
</comment>
<comment type="developmental stage">
    <text evidence="4 5 6">Isoform 1 is expressed in a cluster of cells in the anterior half at 2.5 hours post fertilization (hpf), in hypodermal cells at 5 hpf, in pharyngeal cells, intestinal and some neurons at 6 hpf. Isoform 1 is expressed in pharyngeal cells at L1 larval stage. Isoform 1 is expressed in somatic gonad precursor cells (SGPs) during the L2 larval stage. Isoform 2 is expressed in anterior neuronal cells and posterior hypodermal cells at 5 hpf, in neurons of the head at 7.6 hpf (at protein level). Expressed in somatic gonad founder cells Z1 and Z4, pharynx and muscles.</text>
</comment>
<comment type="PTM">
    <text evidence="4">Probably proteolytically processed to generate a N-terminal intracellular domain.</text>
</comment>
<comment type="disruption phenotype">
    <text evidence="5">Shows gonad disorganization, nerve cord defasciculation and defects in distal tip cell migration and axonal pathfinding. Shows local basement membrane deficiency and early gonad disruption.</text>
</comment>
<comment type="similarity">
    <text evidence="8">Belongs to the tenascin family. Teneurin subfamily.</text>
</comment>
<gene>
    <name type="primary">ten-1</name>
    <name type="ORF">R13F6.4</name>
</gene>
<dbReference type="EMBL" id="AB206835">
    <property type="protein sequence ID" value="BAD91086.1"/>
    <property type="molecule type" value="mRNA"/>
</dbReference>
<dbReference type="EMBL" id="AB206836">
    <property type="protein sequence ID" value="BAD91087.1"/>
    <property type="molecule type" value="mRNA"/>
</dbReference>
<dbReference type="EMBL" id="FO081247">
    <property type="protein sequence ID" value="CCD70175.2"/>
    <property type="molecule type" value="Genomic_DNA"/>
</dbReference>
<dbReference type="EMBL" id="FO081247">
    <property type="protein sequence ID" value="CCD70183.1"/>
    <property type="molecule type" value="Genomic_DNA"/>
</dbReference>
<dbReference type="EMBL" id="FO081246">
    <property type="protein sequence ID" value="CCD70183.1"/>
    <property type="status" value="JOINED"/>
    <property type="molecule type" value="Genomic_DNA"/>
</dbReference>
<dbReference type="RefSeq" id="NP_001022723.2">
    <molecule id="G5EGQ6-1"/>
    <property type="nucleotide sequence ID" value="NM_001027552.5"/>
</dbReference>
<dbReference type="RefSeq" id="NP_001379903.1">
    <molecule id="G5EGQ6-2"/>
    <property type="nucleotide sequence ID" value="NM_001392130.1"/>
</dbReference>
<dbReference type="RefSeq" id="NP_741203.2">
    <property type="nucleotide sequence ID" value="NM_171175.2"/>
</dbReference>
<dbReference type="SMR" id="G5EGQ6"/>
<dbReference type="BioGRID" id="41168">
    <property type="interactions" value="1"/>
</dbReference>
<dbReference type="FunCoup" id="G5EGQ6">
    <property type="interactions" value="991"/>
</dbReference>
<dbReference type="STRING" id="6239.R13F6.4e.1"/>
<dbReference type="PaxDb" id="6239-R13F6.4e"/>
<dbReference type="PeptideAtlas" id="G5EGQ6"/>
<dbReference type="EnsemblMetazoa" id="R13F6.4a.1">
    <molecule id="G5EGQ6-2"/>
    <property type="protein sequence ID" value="R13F6.4a.1"/>
    <property type="gene ID" value="WBGene00006498"/>
</dbReference>
<dbReference type="EnsemblMetazoa" id="R13F6.4a.2">
    <molecule id="G5EGQ6-2"/>
    <property type="protein sequence ID" value="R13F6.4a.2"/>
    <property type="gene ID" value="WBGene00006498"/>
</dbReference>
<dbReference type="EnsemblMetazoa" id="R13F6.4d.1">
    <molecule id="G5EGQ6-1"/>
    <property type="protein sequence ID" value="R13F6.4d.1"/>
    <property type="gene ID" value="WBGene00006498"/>
</dbReference>
<dbReference type="GeneID" id="175953"/>
<dbReference type="KEGG" id="cel:CELE_R13F6.4"/>
<dbReference type="UCSC" id="R13F6.4a">
    <property type="organism name" value="c. elegans"/>
</dbReference>
<dbReference type="AGR" id="WB:WBGene00006498"/>
<dbReference type="CTD" id="175953"/>
<dbReference type="WormBase" id="R13F6.4a">
    <molecule id="G5EGQ6-2"/>
    <property type="protein sequence ID" value="CE46838"/>
    <property type="gene ID" value="WBGene00006498"/>
    <property type="gene designation" value="ten-1"/>
</dbReference>
<dbReference type="WormBase" id="R13F6.4d">
    <molecule id="G5EGQ6-1"/>
    <property type="protein sequence ID" value="CE42908"/>
    <property type="gene ID" value="WBGene00006498"/>
    <property type="gene designation" value="ten-1"/>
</dbReference>
<dbReference type="eggNOG" id="KOG1225">
    <property type="taxonomic scope" value="Eukaryota"/>
</dbReference>
<dbReference type="eggNOG" id="KOG4659">
    <property type="taxonomic scope" value="Eukaryota"/>
</dbReference>
<dbReference type="InParanoid" id="G5EGQ6"/>
<dbReference type="OrthoDB" id="442731at2759"/>
<dbReference type="PhylomeDB" id="G5EGQ6"/>
<dbReference type="PRO" id="PR:G5EGQ6"/>
<dbReference type="Proteomes" id="UP000001940">
    <property type="component" value="Chromosome III"/>
</dbReference>
<dbReference type="Bgee" id="WBGene00006498">
    <property type="expression patterns" value="Expressed in pharyngeal muscle cell (C elegans) and 4 other cell types or tissues"/>
</dbReference>
<dbReference type="ExpressionAtlas" id="G5EGQ6">
    <property type="expression patterns" value="baseline and differential"/>
</dbReference>
<dbReference type="GO" id="GO:0005634">
    <property type="term" value="C:nucleus"/>
    <property type="evidence" value="ECO:0000314"/>
    <property type="project" value="UniProtKB"/>
</dbReference>
<dbReference type="GO" id="GO:0005886">
    <property type="term" value="C:plasma membrane"/>
    <property type="evidence" value="ECO:0000314"/>
    <property type="project" value="UniProtKB"/>
</dbReference>
<dbReference type="GO" id="GO:0009887">
    <property type="term" value="P:animal organ morphogenesis"/>
    <property type="evidence" value="ECO:0000316"/>
    <property type="project" value="WormBase"/>
</dbReference>
<dbReference type="GO" id="GO:0007411">
    <property type="term" value="P:axon guidance"/>
    <property type="evidence" value="ECO:0000315"/>
    <property type="project" value="UniProtKB"/>
</dbReference>
<dbReference type="GO" id="GO:0007413">
    <property type="term" value="P:axonal fasciculation"/>
    <property type="evidence" value="ECO:0000315"/>
    <property type="project" value="UniProtKB"/>
</dbReference>
<dbReference type="GO" id="GO:2001197">
    <property type="term" value="P:basement membrane assembly involved in embryonic body morphogenesis"/>
    <property type="evidence" value="ECO:0000315"/>
    <property type="project" value="UniProtKB"/>
</dbReference>
<dbReference type="GO" id="GO:0071711">
    <property type="term" value="P:basement membrane organization"/>
    <property type="evidence" value="ECO:0000315"/>
    <property type="project" value="WormBase"/>
</dbReference>
<dbReference type="GO" id="GO:0016477">
    <property type="term" value="P:cell migration"/>
    <property type="evidence" value="ECO:0000315"/>
    <property type="project" value="UniProtKB"/>
</dbReference>
<dbReference type="GO" id="GO:0030421">
    <property type="term" value="P:defecation"/>
    <property type="evidence" value="ECO:0000315"/>
    <property type="project" value="WormBase"/>
</dbReference>
<dbReference type="GO" id="GO:0009792">
    <property type="term" value="P:embryo development ending in birth or egg hatching"/>
    <property type="evidence" value="ECO:0000315"/>
    <property type="project" value="WormBase"/>
</dbReference>
<dbReference type="GO" id="GO:0010172">
    <property type="term" value="P:embryonic body morphogenesis"/>
    <property type="evidence" value="ECO:0000316"/>
    <property type="project" value="WormBase"/>
</dbReference>
<dbReference type="GO" id="GO:0008585">
    <property type="term" value="P:female gonad development"/>
    <property type="evidence" value="ECO:0000315"/>
    <property type="project" value="UniProtKB"/>
</dbReference>
<dbReference type="GO" id="GO:0007276">
    <property type="term" value="P:gamete generation"/>
    <property type="evidence" value="ECO:0000315"/>
    <property type="project" value="WormBase"/>
</dbReference>
<dbReference type="GO" id="GO:0008406">
    <property type="term" value="P:gonad development"/>
    <property type="evidence" value="ECO:0000315"/>
    <property type="project" value="WormBase"/>
</dbReference>
<dbReference type="GO" id="GO:0040039">
    <property type="term" value="P:inductive cell migration"/>
    <property type="evidence" value="ECO:0000315"/>
    <property type="project" value="WormBase"/>
</dbReference>
<dbReference type="GO" id="GO:0008584">
    <property type="term" value="P:male gonad development"/>
    <property type="evidence" value="ECO:0000315"/>
    <property type="project" value="UniProtKB"/>
</dbReference>
<dbReference type="GO" id="GO:0008045">
    <property type="term" value="P:motor neuron axon guidance"/>
    <property type="evidence" value="ECO:0000315"/>
    <property type="project" value="UniProtKB"/>
</dbReference>
<dbReference type="GO" id="GO:0160094">
    <property type="term" value="P:nematode pharynx development"/>
    <property type="evidence" value="ECO:0000315"/>
    <property type="project" value="UniProtKB"/>
</dbReference>
<dbReference type="GO" id="GO:0040032">
    <property type="term" value="P:post-embryonic body morphogenesis"/>
    <property type="evidence" value="ECO:0000315"/>
    <property type="project" value="WormBase"/>
</dbReference>
<dbReference type="GO" id="GO:0019953">
    <property type="term" value="P:sexual reproduction"/>
    <property type="evidence" value="ECO:0000315"/>
    <property type="project" value="WormBase"/>
</dbReference>
<dbReference type="CDD" id="cd00055">
    <property type="entry name" value="EGF_Lam"/>
    <property type="match status" value="1"/>
</dbReference>
<dbReference type="FunFam" id="2.10.25.10:FF:000021">
    <property type="entry name" value="Teneurin transmembrane protein 2"/>
    <property type="match status" value="1"/>
</dbReference>
<dbReference type="FunFam" id="2.10.25.10:FF:000013">
    <property type="entry name" value="Teneurin transmembrane protein 4"/>
    <property type="match status" value="1"/>
</dbReference>
<dbReference type="FunFam" id="2.120.10.30:FF:000211">
    <property type="entry name" value="Teneurin-1"/>
    <property type="match status" value="1"/>
</dbReference>
<dbReference type="Gene3D" id="2.10.25.10">
    <property type="entry name" value="Laminin"/>
    <property type="match status" value="6"/>
</dbReference>
<dbReference type="Gene3D" id="2.120.10.30">
    <property type="entry name" value="TolB, C-terminal domain"/>
    <property type="match status" value="2"/>
</dbReference>
<dbReference type="InterPro" id="IPR011042">
    <property type="entry name" value="6-blade_b-propeller_TolB-like"/>
</dbReference>
<dbReference type="InterPro" id="IPR000742">
    <property type="entry name" value="EGF-like_dom"/>
</dbReference>
<dbReference type="InterPro" id="IPR002049">
    <property type="entry name" value="LE_dom"/>
</dbReference>
<dbReference type="InterPro" id="IPR001258">
    <property type="entry name" value="NHL_repeat"/>
</dbReference>
<dbReference type="InterPro" id="IPR056822">
    <property type="entry name" value="TEN_NHL"/>
</dbReference>
<dbReference type="InterPro" id="IPR056820">
    <property type="entry name" value="TEN_TTR-like"/>
</dbReference>
<dbReference type="InterPro" id="IPR056823">
    <property type="entry name" value="TEN_YD-shell"/>
</dbReference>
<dbReference type="InterPro" id="IPR051216">
    <property type="entry name" value="Teneurin"/>
</dbReference>
<dbReference type="InterPro" id="IPR028916">
    <property type="entry name" value="Tox-GHH_dom"/>
</dbReference>
<dbReference type="PANTHER" id="PTHR11219">
    <property type="entry name" value="TENEURIN AND N-ACETYLGLUCOSAMINE-1-PHOSPHODIESTER ALPHA-N-ACETYLGLUCOSAMINIDASE"/>
    <property type="match status" value="1"/>
</dbReference>
<dbReference type="PANTHER" id="PTHR11219:SF69">
    <property type="entry name" value="TENEURIN-A"/>
    <property type="match status" value="1"/>
</dbReference>
<dbReference type="Pfam" id="PF25024">
    <property type="entry name" value="EGF_TEN"/>
    <property type="match status" value="1"/>
</dbReference>
<dbReference type="Pfam" id="PF24329">
    <property type="entry name" value="FN-plug_TEN1-4"/>
    <property type="match status" value="1"/>
</dbReference>
<dbReference type="Pfam" id="PF23093">
    <property type="entry name" value="GBD_Tenm3"/>
    <property type="match status" value="1"/>
</dbReference>
<dbReference type="Pfam" id="PF25021">
    <property type="entry name" value="TEN_NHL"/>
    <property type="match status" value="1"/>
</dbReference>
<dbReference type="Pfam" id="PF25023">
    <property type="entry name" value="TEN_YD-shell"/>
    <property type="match status" value="1"/>
</dbReference>
<dbReference type="Pfam" id="PF15636">
    <property type="entry name" value="Tox-GHH"/>
    <property type="match status" value="1"/>
</dbReference>
<dbReference type="Pfam" id="PF25020">
    <property type="entry name" value="TTR_TEN1-4"/>
    <property type="match status" value="1"/>
</dbReference>
<dbReference type="SMART" id="SM00181">
    <property type="entry name" value="EGF"/>
    <property type="match status" value="7"/>
</dbReference>
<dbReference type="SUPFAM" id="SSF101898">
    <property type="entry name" value="NHL repeat"/>
    <property type="match status" value="1"/>
</dbReference>
<dbReference type="PROSITE" id="PS00022">
    <property type="entry name" value="EGF_1"/>
    <property type="match status" value="7"/>
</dbReference>
<dbReference type="PROSITE" id="PS01186">
    <property type="entry name" value="EGF_2"/>
    <property type="match status" value="7"/>
</dbReference>
<dbReference type="PROSITE" id="PS50026">
    <property type="entry name" value="EGF_3"/>
    <property type="match status" value="4"/>
</dbReference>
<dbReference type="PROSITE" id="PS51125">
    <property type="entry name" value="NHL"/>
    <property type="match status" value="4"/>
</dbReference>
<protein>
    <recommendedName>
        <fullName>Teneurin-1</fullName>
    </recommendedName>
</protein>
<keyword id="KW-0025">Alternative splicing</keyword>
<keyword id="KW-1003">Cell membrane</keyword>
<keyword id="KW-0217">Developmental protein</keyword>
<keyword id="KW-1015">Disulfide bond</keyword>
<keyword id="KW-0245">EGF-like domain</keyword>
<keyword id="KW-0472">Membrane</keyword>
<keyword id="KW-0539">Nucleus</keyword>
<keyword id="KW-1185">Reference proteome</keyword>
<keyword id="KW-0677">Repeat</keyword>
<keyword id="KW-0812">Transmembrane</keyword>
<keyword id="KW-1133">Transmembrane helix</keyword>
<organism>
    <name type="scientific">Caenorhabditis elegans</name>
    <dbReference type="NCBI Taxonomy" id="6239"/>
    <lineage>
        <taxon>Eukaryota</taxon>
        <taxon>Metazoa</taxon>
        <taxon>Ecdysozoa</taxon>
        <taxon>Nematoda</taxon>
        <taxon>Chromadorea</taxon>
        <taxon>Rhabditida</taxon>
        <taxon>Rhabditina</taxon>
        <taxon>Rhabditomorpha</taxon>
        <taxon>Rhabditoidea</taxon>
        <taxon>Rhabditidae</taxon>
        <taxon>Peloderinae</taxon>
        <taxon>Caenorhabditis</taxon>
    </lineage>
</organism>
<sequence length="2684" mass="296470">MFQHRTTNAQGPPPNRPMPRPPAGMPMMTSSHEHDYTNDYEDPEEMARSRGEGFSNHLLIKTTPPPQPHPNFNSYEMSMSQQRRSQQHQQPMAPPLSDCWGSGVHDSGVLHKNADGAYYIPSGSLRTTSSTLSPASGQRYLDQPHTSGGAPNPTYSDASTTLLKYPLAAGTNQNRRRQQVGTMNNGDPVAGGPMALSKKKKKFDDDSDTCSRWPSKWNILLAAALLVALFVICILLFRAPNYVYTQPAPSSDATSSAAAAASRYQDLGLRALPPAISLGERVDVEFFPKSMATTELTVTKPSRIRFNATVGSGAQLVLLMSAGVHPSLSLHDALFPIRADRIRDSKSPTHIVEEFGSRSRRSLGASSSRHRNIEILSPRSATFEQFVLEGRHYLTFINERSRVEPISFVAEELQRPTTPPKTSSSGTSGAKEHPLASVLVCESNCNQRGECVHGKCHCAPGFTGRTCDEAVCPVVCSGNGVFSGGICVCKSGFKGKECEMRHNWCEVADCNGRGRCDTDGRCRCNPGWTGEACELRACPHASCHDRGVCVNGTCYCMDGWRGNDCSVFADAIVHVPQAQSPPRRGQEPTESSKTRKAQVKPTPTSEKKKESRELQKPIIATVQVPTESSHPCSAHGQLIDDICQCESGWDSVDCSQQACQCVNGDCLDDGSCQCWKGWRGSNCTDKKCAIGCEDRGKCASDGSCKCSSGWNGENCAIDGCPNQCSGKGECGMDRRSSEWSCRCQAGSTGVDCSVSVEMHCDDGLDNDSDGLIDCDDPECCSSSSCSSESVCSTAASPIEVLMRMPPIFNANFAQRVGFLIMEKSVQSYTDSSQFNENLISVIRGRVMWGGSPTGSDDLSTYSNKSTVPLVGVRVSDAAHPLYGFTLTREDGYFDLTVNGARSVTLQFLRTQFQSVKKSVFVSPRQIIHIDDIVLYRQSGGSPPAISMAPARAKCSPTLRRIPDVVLISNWQYTSDGIETDETSDSSRIVVDSRSIFESLPIQGTDVRLVYDSARSPAAPSTMLIGLLYDRVDKELRKVHINIRIAGRRFDRVLAPRTNLTYVFAWDKMNAYRQSESGLVPVTVRVGYEYQGCDRTSERVWQTRRSQMMGATARKMIGTMWTLDIHHHLDIVNNVVEMGNGGYRLITESEPRVSTFAGLDGVKRDVECLKCEGKVDSISLFRPTTVVYAQDGSLIIGDHNMIRRVSQDGQVSTILTLGLADTSHSYYIAVSPVDGTIAISLPLHKQVWRISSLEPQDSRNNYDVLAGDGTVCASAVDSCGDGALAQNAQLIFPKGISFDKMGNLYLADSRRIRVIDTTGHIRSIGETTPDQHPIRTCAQITKLVDLQMEWPTSLTIDPITGSVLVLDTNVVYEIDVVHDVVTIALGSPTTCDLANATSSASAKSLDHRRHLIQNARDITVGTDGAIYVVESDGRRLNQVRKLSSDRSTFSILTGGKSPCSCDVAACGCDDAVSLRDVAASQAHLSSPYAVCVSPSGDVIIADSGNSKIKKVSARMAKYDGRSRTYEVTDAERQEKYTFNRHGQHSSTVSLITGRTFFNFSYQVDSPISMISEIRAASGVVLRVLKRNDSLFDLETTLGQRTTLTMSAYDGTLEQVSKRDSATSRDATKLFYKKGLLTSRIDVATAVGFEYDEYGRAIGLKRDREYWRLGEETISMGSVNTEVLLNGQRFQQVRLGEGNLAVHSTNGATTRLISLRNEGYSLASPLGTSTLYDKSSSIPDSNGEPLISRRRTKVPAIGNPQRRELTTRWDWRHVARRGDDSDGSLGRRKVAEINGVNMFSMEYDVKSNQDTLRLGSTTDDAQALLFIDYTSSGRIRRISAPEDSQMAEMNITWDGAGRKSEVTWGSWKIRLTYDNSNRLTEHAIDGARVPIKMSYAGASRRPNEIQHDGAKWNIQYDNYDRIKEVISKSQEATSFSSIALGGDEWVLKRRTSLNSKPSLVRLSREGKVLESTTPDENHYWLERKDPITGRTTEILNDEETTVVTCWSPEGAPMCSRSRNLQENTTMQGHLVARKSVTIMTPTSSEPSITSSFTYEYDDMLRVTTIQPVIEQSVLESIQLSYDERRGHVAAINGFKWARDASTSRCQGHGLMYETSKANDHRQVVERKLIFGDARASIKIIRDKAGRASESHLEISSSGTQRNQKITRTFDAAGRVASVEQNDQEPVRIIWNSDARVEKINDRVVEWNRGGALKTFQDISYQVDSIGWVVKRDNTTVFGYDGKGRLVSARSSQLRINIFYDREDRVVQIQNSKDFIHFYYGYIDTPKLVSHFSKNGKISTLFYDDDSVPFAMQSDDGTRYALLTDETSTIKAIIGDSNVLRIIDRSVFGALLPSSSSSHPFLPIGYLGGIEISEISVSILNNGRPLDLYSERYMSISPEAVVRLELNEKFSNSIDLMALEIDRQPFRVENVPEDFETWFSLAGLSPNLLPSAHLGLPASSAIVHRLLSSFPRKLRPLTHLTTVLPTRLASDISLTSPTSETSWSIDDVGFSNLLILNEDATTGEVMVEMLSDLKSEEREVISKLFDGVKSLDFATWGLVPTRHLWRAPNSKLELSSTSFSHFTMAVNKDSVELRNGKSKIVVHFSENKAEIVKKIVEELKTRENIAVWRAERKRAEAGEKTWRQWSDRETRELTSKGSVSGYDIEMKPAHQSGLLASVHSWKFRKSE</sequence>
<proteinExistence type="evidence at protein level"/>
<reference key="1">
    <citation type="journal article" date="2005" name="Dev. Biol.">
        <title>ten-1, an essential gene for germ cell development, epidermal morphogenesis, gonad migration, and neuronal pathfinding in Caenorhabditis elegans.</title>
        <authorList>
            <person name="Drabikowski K."/>
            <person name="Trzebiatowska A."/>
            <person name="Chiquet-Ehrismann R."/>
        </authorList>
    </citation>
    <scope>NUCLEOTIDE SEQUENCE [MRNA] (ISOFORMS 1 AND 2)</scope>
    <scope>FUNCTION</scope>
    <scope>PROTEOLYTIC PROCESSING</scope>
    <scope>SUBCELLULAR LOCATION</scope>
    <scope>DEVELOPMENTAL STAGE</scope>
    <source>
        <strain>Bristol</strain>
    </source>
</reference>
<reference key="2">
    <citation type="journal article" date="1998" name="Science">
        <title>Genome sequence of the nematode C. elegans: a platform for investigating biology.</title>
        <authorList>
            <consortium name="The C. elegans sequencing consortium"/>
        </authorList>
    </citation>
    <scope>NUCLEOTIDE SEQUENCE [LARGE SCALE GENOMIC DNA]</scope>
    <source>
        <strain>Bristol N2</strain>
    </source>
</reference>
<reference key="3">
    <citation type="journal article" date="2008" name="Mol. Biol. Cell">
        <title>Caenorhabditis elegans teneurin, ten-1, is required for gonadal and pharyngeal basement membrane integrity and acts redundantly with integrin ina-1 and dystroglycan dgn-1.</title>
        <authorList>
            <person name="Trzebiatowska A."/>
            <person name="Topf U."/>
            <person name="Sauder U."/>
            <person name="Drabikowski K."/>
            <person name="Chiquet-Ehrismann R."/>
        </authorList>
    </citation>
    <scope>FUNCTION</scope>
    <scope>DISRUPTION PHENOTYPE</scope>
    <scope>TISSUE SPECIFICITY</scope>
    <scope>DEVELOPMENTAL STAGE</scope>
</reference>
<reference key="4">
    <citation type="journal article" date="2010" name="BMC Dev. Biol.">
        <title>C. elegans ten-1 is synthetic lethal with mutations in cytoskeleton regulators, and enhances many axon guidance defective mutants.</title>
        <authorList>
            <person name="Morck C."/>
            <person name="Vivekanand V."/>
            <person name="Jafari G."/>
            <person name="Pilon M."/>
        </authorList>
    </citation>
    <scope>FUNCTION</scope>
    <scope>TISSUE SPECIFICITY</scope>
    <scope>DEVELOPMENTAL STAGE</scope>
</reference>